<organism>
    <name type="scientific">Salmonella typhimurium (strain LT2 / SGSC1412 / ATCC 700720)</name>
    <dbReference type="NCBI Taxonomy" id="99287"/>
    <lineage>
        <taxon>Bacteria</taxon>
        <taxon>Pseudomonadati</taxon>
        <taxon>Pseudomonadota</taxon>
        <taxon>Gammaproteobacteria</taxon>
        <taxon>Enterobacterales</taxon>
        <taxon>Enterobacteriaceae</taxon>
        <taxon>Salmonella</taxon>
    </lineage>
</organism>
<proteinExistence type="inferred from homology"/>
<evidence type="ECO:0000255" key="1"/>
<evidence type="ECO:0000305" key="2"/>
<protein>
    <recommendedName>
        <fullName>High-affinity branched-chain amino acid transport system permease protein LivM</fullName>
    </recommendedName>
    <alternativeName>
        <fullName>LIV-I protein M</fullName>
    </alternativeName>
</protein>
<name>LIVM_SALTY</name>
<comment type="function">
    <text>Part of the binding-protein-dependent transport system for branched-chain amino acids. Probably responsible for the translocation of the substrates across the membrane.</text>
</comment>
<comment type="subcellular location">
    <subcellularLocation>
        <location>Cell inner membrane</location>
        <topology>Multi-pass membrane protein</topology>
    </subcellularLocation>
</comment>
<comment type="similarity">
    <text evidence="2">Belongs to the binding-protein-dependent transport system permease family. LivHM subfamily.</text>
</comment>
<dbReference type="EMBL" id="D12589">
    <property type="protein sequence ID" value="BAA02130.1"/>
    <property type="molecule type" value="Genomic_DNA"/>
</dbReference>
<dbReference type="EMBL" id="AE006468">
    <property type="protein sequence ID" value="AAL22422.1"/>
    <property type="molecule type" value="Genomic_DNA"/>
</dbReference>
<dbReference type="PIR" id="JH0669">
    <property type="entry name" value="JH0669"/>
</dbReference>
<dbReference type="RefSeq" id="NP_462463.1">
    <property type="nucleotide sequence ID" value="NC_003197.2"/>
</dbReference>
<dbReference type="RefSeq" id="WP_000803766.1">
    <property type="nucleotide sequence ID" value="NC_003197.2"/>
</dbReference>
<dbReference type="STRING" id="99287.STM3562"/>
<dbReference type="PaxDb" id="99287-STM3562"/>
<dbReference type="GeneID" id="1255085"/>
<dbReference type="KEGG" id="stm:STM3562"/>
<dbReference type="PATRIC" id="fig|99287.12.peg.3765"/>
<dbReference type="HOGENOM" id="CLU_031365_1_1_6"/>
<dbReference type="OMA" id="VFWYKLQ"/>
<dbReference type="PhylomeDB" id="P30296"/>
<dbReference type="BioCyc" id="SENT99287:STM3562-MONOMER"/>
<dbReference type="Proteomes" id="UP000001014">
    <property type="component" value="Chromosome"/>
</dbReference>
<dbReference type="GO" id="GO:0005886">
    <property type="term" value="C:plasma membrane"/>
    <property type="evidence" value="ECO:0000318"/>
    <property type="project" value="GO_Central"/>
</dbReference>
<dbReference type="GO" id="GO:0015658">
    <property type="term" value="F:branched-chain amino acid transmembrane transporter activity"/>
    <property type="evidence" value="ECO:0000318"/>
    <property type="project" value="GO_Central"/>
</dbReference>
<dbReference type="GO" id="GO:0006865">
    <property type="term" value="P:amino acid transport"/>
    <property type="evidence" value="ECO:0007669"/>
    <property type="project" value="UniProtKB-KW"/>
</dbReference>
<dbReference type="GO" id="GO:0015803">
    <property type="term" value="P:branched-chain amino acid transport"/>
    <property type="evidence" value="ECO:0000318"/>
    <property type="project" value="GO_Central"/>
</dbReference>
<dbReference type="CDD" id="cd06581">
    <property type="entry name" value="TM_PBP1_LivM_like"/>
    <property type="match status" value="1"/>
</dbReference>
<dbReference type="InterPro" id="IPR001851">
    <property type="entry name" value="ABC_transp_permease"/>
</dbReference>
<dbReference type="InterPro" id="IPR021807">
    <property type="entry name" value="LivHM_N"/>
</dbReference>
<dbReference type="InterPro" id="IPR043428">
    <property type="entry name" value="LivM-like"/>
</dbReference>
<dbReference type="NCBIfam" id="NF008450">
    <property type="entry name" value="PRK11301.1"/>
    <property type="match status" value="1"/>
</dbReference>
<dbReference type="PANTHER" id="PTHR30482">
    <property type="entry name" value="HIGH-AFFINITY BRANCHED-CHAIN AMINO ACID TRANSPORT SYSTEM PERMEASE"/>
    <property type="match status" value="1"/>
</dbReference>
<dbReference type="PANTHER" id="PTHR30482:SF20">
    <property type="entry name" value="HIGH-AFFINITY BRANCHED-CHAIN AMINO ACID TRANSPORT SYSTEM PERMEASE PROTEIN LIVM"/>
    <property type="match status" value="1"/>
</dbReference>
<dbReference type="Pfam" id="PF02653">
    <property type="entry name" value="BPD_transp_2"/>
    <property type="match status" value="1"/>
</dbReference>
<dbReference type="Pfam" id="PF11862">
    <property type="entry name" value="DUF3382"/>
    <property type="match status" value="1"/>
</dbReference>
<gene>
    <name type="primary">livM</name>
    <name type="synonym">livE</name>
    <name type="ordered locus">STM3562</name>
</gene>
<feature type="chain" id="PRO_0000060063" description="High-affinity branched-chain amino acid transport system permease protein LivM">
    <location>
        <begin position="1"/>
        <end position="425"/>
    </location>
</feature>
<feature type="transmembrane region" description="Helical" evidence="1">
    <location>
        <begin position="6"/>
        <end position="26"/>
    </location>
</feature>
<feature type="transmembrane region" description="Helical" evidence="1">
    <location>
        <begin position="45"/>
        <end position="65"/>
    </location>
</feature>
<feature type="transmembrane region" description="Helical" evidence="1">
    <location>
        <begin position="92"/>
        <end position="112"/>
    </location>
</feature>
<feature type="transmembrane region" description="Helical" evidence="1">
    <location>
        <begin position="120"/>
        <end position="140"/>
    </location>
</feature>
<feature type="transmembrane region" description="Helical" evidence="1">
    <location>
        <begin position="145"/>
        <end position="165"/>
    </location>
</feature>
<feature type="transmembrane region" description="Helical" evidence="1">
    <location>
        <begin position="167"/>
        <end position="187"/>
    </location>
</feature>
<feature type="transmembrane region" description="Helical" evidence="1">
    <location>
        <begin position="191"/>
        <end position="211"/>
    </location>
</feature>
<feature type="transmembrane region" description="Helical" evidence="1">
    <location>
        <begin position="260"/>
        <end position="280"/>
    </location>
</feature>
<feature type="transmembrane region" description="Helical" evidence="1">
    <location>
        <begin position="311"/>
        <end position="331"/>
    </location>
</feature>
<feature type="transmembrane region" description="Helical" evidence="1">
    <location>
        <begin position="353"/>
        <end position="373"/>
    </location>
</feature>
<feature type="transmembrane region" description="Helical" evidence="1">
    <location>
        <begin position="388"/>
        <end position="408"/>
    </location>
</feature>
<reference key="1">
    <citation type="journal article" date="1992" name="J. Biochem.">
        <title>Nucleotide sequences and characterization of liv genes encoding components of the high-affinity branched-chain amino acid transport system in Salmonella typhimurium.</title>
        <authorList>
            <person name="Matsubara K."/>
            <person name="Ohnishi K."/>
            <person name="Kiritani K."/>
        </authorList>
    </citation>
    <scope>NUCLEOTIDE SEQUENCE [GENOMIC DNA]</scope>
    <source>
        <strain>LT2</strain>
    </source>
</reference>
<reference key="2">
    <citation type="journal article" date="2001" name="Nature">
        <title>Complete genome sequence of Salmonella enterica serovar Typhimurium LT2.</title>
        <authorList>
            <person name="McClelland M."/>
            <person name="Sanderson K.E."/>
            <person name="Spieth J."/>
            <person name="Clifton S.W."/>
            <person name="Latreille P."/>
            <person name="Courtney L."/>
            <person name="Porwollik S."/>
            <person name="Ali J."/>
            <person name="Dante M."/>
            <person name="Du F."/>
            <person name="Hou S."/>
            <person name="Layman D."/>
            <person name="Leonard S."/>
            <person name="Nguyen C."/>
            <person name="Scott K."/>
            <person name="Holmes A."/>
            <person name="Grewal N."/>
            <person name="Mulvaney E."/>
            <person name="Ryan E."/>
            <person name="Sun H."/>
            <person name="Florea L."/>
            <person name="Miller W."/>
            <person name="Stoneking T."/>
            <person name="Nhan M."/>
            <person name="Waterston R."/>
            <person name="Wilson R.K."/>
        </authorList>
    </citation>
    <scope>NUCLEOTIDE SEQUENCE [LARGE SCALE GENOMIC DNA]</scope>
    <source>
        <strain>LT2 / SGSC1412 / ATCC 700720</strain>
    </source>
</reference>
<sequence length="425" mass="46408">MKPMHIAMALFSAAMFFVLAGVFMGVQLELDGTKLVVDTAADIRWQWIFIGTAVVFFFQLLRPMFQKAVKHVSGPKFILPAIDGSTVKQKLFLMALLVIAVAWPFMVSRGSVDIATMTMIYIILGLGLNVVVGLSGLLVLGYGGFYAIGAYTFALLNHYYGLGFWTCLPLAGLVSAAAGFLLGFPVLRLRGDYLAIVTLGFGEIVRILLLNNTEITGGPNGISQIPKPTLFGLEFSRSTREGGWDTFSNFFGVKYDPSDRVIFLYLVALLLVVLSLFVINRLLRMPLGRAWEALREDEIACRSLGLSPTRIKLTAFTISAAFAGFAGTLFAARQGFVSPESFTFAESAFVLAIVVLGGMGSQFAVILAAVLLVVSRELMRDFNEYSMLMLGGLMVLMMIWRPQGLLPMTRPQLKLKSGQAKGEQA</sequence>
<keyword id="KW-0029">Amino-acid transport</keyword>
<keyword id="KW-0997">Cell inner membrane</keyword>
<keyword id="KW-1003">Cell membrane</keyword>
<keyword id="KW-0472">Membrane</keyword>
<keyword id="KW-1185">Reference proteome</keyword>
<keyword id="KW-0812">Transmembrane</keyword>
<keyword id="KW-1133">Transmembrane helix</keyword>
<keyword id="KW-0813">Transport</keyword>
<accession>P30296</accession>